<evidence type="ECO:0000250" key="1">
    <source>
        <dbReference type="UniProtKB" id="S0EHD0"/>
    </source>
</evidence>
<evidence type="ECO:0000255" key="2">
    <source>
        <dbReference type="PROSITE-ProRule" id="PRU00684"/>
    </source>
</evidence>
<evidence type="ECO:0000255" key="3">
    <source>
        <dbReference type="PROSITE-ProRule" id="PRU00685"/>
    </source>
</evidence>
<evidence type="ECO:0000269" key="4">
    <source>
    </source>
</evidence>
<evidence type="ECO:0000303" key="5">
    <source>
    </source>
</evidence>
<evidence type="ECO:0000305" key="6"/>
<comment type="function">
    <text evidence="1 4">Glutathione S-transferase-like protein; part of the gene cluster that mediates the biosynthesis of the mycotoxin fusarin C (PubMed:22652150). Within the cluster, FUS1, FUS2, FUS8 and FUS9 are sufficient for fusarin production (By similarity). The other FUS cluster members are not essential for fusarin C biosynthesis (By similarity).</text>
</comment>
<comment type="similarity">
    <text evidence="6">Belongs to the GST superfamily.</text>
</comment>
<sequence>MTSFGTLYTYMPNARVFKILAAAKLNNLIIEIPAYQHGVTNKSAEFLSKFPAGKVPAFEGPDGFCLVESDAIAQYVAQSGPQASQLLGQDAMSSAKIRQWISFFAEEIYPTVLDLVMWRVGLGAFDETTEIKALAQLAYGLSVLEKHLNPGILLTGDELTLADLTGASTLLWAFMHIIDEPMRQQYPNVVAWYLKVVQNEEVKEVFGKPNLIEKRRIGAK</sequence>
<accession>W7MMJ0</accession>
<dbReference type="EC" id="2.5.1.-" evidence="6"/>
<dbReference type="EMBL" id="CM000586">
    <property type="protein sequence ID" value="EWG52306.1"/>
    <property type="molecule type" value="Genomic_DNA"/>
</dbReference>
<dbReference type="RefSeq" id="XP_018758497.1">
    <property type="nucleotide sequence ID" value="XM_018900247.1"/>
</dbReference>
<dbReference type="SMR" id="W7MMJ0"/>
<dbReference type="STRING" id="334819.W7MMJ0"/>
<dbReference type="EnsemblFungi" id="FVEG_11084T0">
    <property type="protein sequence ID" value="FVEG_11084T0"/>
    <property type="gene ID" value="FVEG_11084"/>
</dbReference>
<dbReference type="GeneID" id="30068620"/>
<dbReference type="KEGG" id="fvr:FVEG_11084"/>
<dbReference type="VEuPathDB" id="FungiDB:FVEG_11084"/>
<dbReference type="eggNOG" id="KOG0867">
    <property type="taxonomic scope" value="Eukaryota"/>
</dbReference>
<dbReference type="HOGENOM" id="CLU_011226_3_2_1"/>
<dbReference type="OMA" id="WICYAQG"/>
<dbReference type="OrthoDB" id="10225at110618"/>
<dbReference type="Proteomes" id="UP000009096">
    <property type="component" value="Chromosome 9"/>
</dbReference>
<dbReference type="GO" id="GO:0005737">
    <property type="term" value="C:cytoplasm"/>
    <property type="evidence" value="ECO:0007669"/>
    <property type="project" value="TreeGrafter"/>
</dbReference>
<dbReference type="GO" id="GO:0005634">
    <property type="term" value="C:nucleus"/>
    <property type="evidence" value="ECO:0007669"/>
    <property type="project" value="TreeGrafter"/>
</dbReference>
<dbReference type="GO" id="GO:0016740">
    <property type="term" value="F:transferase activity"/>
    <property type="evidence" value="ECO:0007669"/>
    <property type="project" value="UniProtKB-KW"/>
</dbReference>
<dbReference type="GO" id="GO:0006414">
    <property type="term" value="P:translational elongation"/>
    <property type="evidence" value="ECO:0007669"/>
    <property type="project" value="TreeGrafter"/>
</dbReference>
<dbReference type="CDD" id="cd03181">
    <property type="entry name" value="GST_C_EF1Bgamma_like"/>
    <property type="match status" value="1"/>
</dbReference>
<dbReference type="CDD" id="cd03044">
    <property type="entry name" value="GST_N_EF1Bgamma"/>
    <property type="match status" value="1"/>
</dbReference>
<dbReference type="FunFam" id="1.20.1050.10:FF:000006">
    <property type="entry name" value="Elongation factor 1 gamma"/>
    <property type="match status" value="1"/>
</dbReference>
<dbReference type="FunFam" id="3.40.30.10:FF:000148">
    <property type="entry name" value="Elongation factor 1B gamma"/>
    <property type="match status" value="1"/>
</dbReference>
<dbReference type="Gene3D" id="1.20.1050.10">
    <property type="match status" value="1"/>
</dbReference>
<dbReference type="Gene3D" id="3.40.30.10">
    <property type="entry name" value="Glutaredoxin"/>
    <property type="match status" value="1"/>
</dbReference>
<dbReference type="InterPro" id="IPR050802">
    <property type="entry name" value="EF-GSTs"/>
</dbReference>
<dbReference type="InterPro" id="IPR010987">
    <property type="entry name" value="Glutathione-S-Trfase_C-like"/>
</dbReference>
<dbReference type="InterPro" id="IPR036282">
    <property type="entry name" value="Glutathione-S-Trfase_C_sf"/>
</dbReference>
<dbReference type="InterPro" id="IPR040079">
    <property type="entry name" value="Glutathione_S-Trfase"/>
</dbReference>
<dbReference type="InterPro" id="IPR004045">
    <property type="entry name" value="Glutathione_S-Trfase_N"/>
</dbReference>
<dbReference type="InterPro" id="IPR004046">
    <property type="entry name" value="GST_C"/>
</dbReference>
<dbReference type="InterPro" id="IPR036249">
    <property type="entry name" value="Thioredoxin-like_sf"/>
</dbReference>
<dbReference type="PANTHER" id="PTHR43986">
    <property type="entry name" value="ELONGATION FACTOR 1-GAMMA"/>
    <property type="match status" value="1"/>
</dbReference>
<dbReference type="PANTHER" id="PTHR43986:SF10">
    <property type="entry name" value="ELONGATION FACTOR EEF-1B GAMMA SUBUNIT, PUTATIVE (AFU_ORTHOLOGUE AFUA_1G17120)-RELATED"/>
    <property type="match status" value="1"/>
</dbReference>
<dbReference type="Pfam" id="PF00043">
    <property type="entry name" value="GST_C"/>
    <property type="match status" value="1"/>
</dbReference>
<dbReference type="Pfam" id="PF02798">
    <property type="entry name" value="GST_N"/>
    <property type="match status" value="1"/>
</dbReference>
<dbReference type="SFLD" id="SFLDS00019">
    <property type="entry name" value="Glutathione_Transferase_(cytos"/>
    <property type="match status" value="1"/>
</dbReference>
<dbReference type="SFLD" id="SFLDG00358">
    <property type="entry name" value="Main_(cytGST)"/>
    <property type="match status" value="1"/>
</dbReference>
<dbReference type="SUPFAM" id="SSF47616">
    <property type="entry name" value="GST C-terminal domain-like"/>
    <property type="match status" value="1"/>
</dbReference>
<dbReference type="SUPFAM" id="SSF52833">
    <property type="entry name" value="Thioredoxin-like"/>
    <property type="match status" value="1"/>
</dbReference>
<dbReference type="PROSITE" id="PS50405">
    <property type="entry name" value="GST_CTER"/>
    <property type="match status" value="1"/>
</dbReference>
<dbReference type="PROSITE" id="PS50404">
    <property type="entry name" value="GST_NTER"/>
    <property type="match status" value="1"/>
</dbReference>
<keyword id="KW-1185">Reference proteome</keyword>
<keyword id="KW-0808">Transferase</keyword>
<gene>
    <name evidence="5" type="primary">FUS3</name>
    <name type="ORF">FVEG_11084</name>
</gene>
<reference key="1">
    <citation type="journal article" date="2010" name="Nature">
        <title>Comparative genomics reveals mobile pathogenicity chromosomes in Fusarium.</title>
        <authorList>
            <person name="Ma L.-J."/>
            <person name="van der Does H.C."/>
            <person name="Borkovich K.A."/>
            <person name="Coleman J.J."/>
            <person name="Daboussi M.-J."/>
            <person name="Di Pietro A."/>
            <person name="Dufresne M."/>
            <person name="Freitag M."/>
            <person name="Grabherr M."/>
            <person name="Henrissat B."/>
            <person name="Houterman P.M."/>
            <person name="Kang S."/>
            <person name="Shim W.-B."/>
            <person name="Woloshuk C."/>
            <person name="Xie X."/>
            <person name="Xu J.-R."/>
            <person name="Antoniw J."/>
            <person name="Baker S.E."/>
            <person name="Bluhm B.H."/>
            <person name="Breakspear A."/>
            <person name="Brown D.W."/>
            <person name="Butchko R.A.E."/>
            <person name="Chapman S."/>
            <person name="Coulson R."/>
            <person name="Coutinho P.M."/>
            <person name="Danchin E.G.J."/>
            <person name="Diener A."/>
            <person name="Gale L.R."/>
            <person name="Gardiner D.M."/>
            <person name="Goff S."/>
            <person name="Hammond-Kosack K.E."/>
            <person name="Hilburn K."/>
            <person name="Hua-Van A."/>
            <person name="Jonkers W."/>
            <person name="Kazan K."/>
            <person name="Kodira C.D."/>
            <person name="Koehrsen M."/>
            <person name="Kumar L."/>
            <person name="Lee Y.-H."/>
            <person name="Li L."/>
            <person name="Manners J.M."/>
            <person name="Miranda-Saavedra D."/>
            <person name="Mukherjee M."/>
            <person name="Park G."/>
            <person name="Park J."/>
            <person name="Park S.-Y."/>
            <person name="Proctor R.H."/>
            <person name="Regev A."/>
            <person name="Ruiz-Roldan M.C."/>
            <person name="Sain D."/>
            <person name="Sakthikumar S."/>
            <person name="Sykes S."/>
            <person name="Schwartz D.C."/>
            <person name="Turgeon B.G."/>
            <person name="Wapinski I."/>
            <person name="Yoder O."/>
            <person name="Young S."/>
            <person name="Zeng Q."/>
            <person name="Zhou S."/>
            <person name="Galagan J."/>
            <person name="Cuomo C.A."/>
            <person name="Kistler H.C."/>
            <person name="Rep M."/>
        </authorList>
    </citation>
    <scope>NUCLEOTIDE SEQUENCE [LARGE SCALE GENOMIC DNA]</scope>
    <source>
        <strain>M3125 / FGSC 7600</strain>
    </source>
</reference>
<reference key="2">
    <citation type="journal article" date="2012" name="Fungal Genet. Biol.">
        <title>Identification of gene clusters associated with fusaric acid, fusarin, and perithecial pigment production in Fusarium verticillioides.</title>
        <authorList>
            <person name="Brown D.W."/>
            <person name="Butchko R.A."/>
            <person name="Busman M."/>
            <person name="Proctor R.H."/>
        </authorList>
    </citation>
    <scope>FUNCTION</scope>
</reference>
<organism>
    <name type="scientific">Gibberella moniliformis (strain M3125 / FGSC 7600)</name>
    <name type="common">Maize ear and stalk rot fungus</name>
    <name type="synonym">Fusarium verticillioides</name>
    <dbReference type="NCBI Taxonomy" id="334819"/>
    <lineage>
        <taxon>Eukaryota</taxon>
        <taxon>Fungi</taxon>
        <taxon>Dikarya</taxon>
        <taxon>Ascomycota</taxon>
        <taxon>Pezizomycotina</taxon>
        <taxon>Sordariomycetes</taxon>
        <taxon>Hypocreomycetidae</taxon>
        <taxon>Hypocreales</taxon>
        <taxon>Nectriaceae</taxon>
        <taxon>Fusarium</taxon>
        <taxon>Fusarium fujikuroi species complex</taxon>
    </lineage>
</organism>
<proteinExistence type="inferred from homology"/>
<name>FUS3_GIBM7</name>
<protein>
    <recommendedName>
        <fullName evidence="6">Glutathione S-transferase-like protein FUS3</fullName>
        <ecNumber evidence="6">2.5.1.-</ecNumber>
    </recommendedName>
    <alternativeName>
        <fullName evidence="5">Fusarin biosynthesis protein 3</fullName>
    </alternativeName>
</protein>
<feature type="chain" id="PRO_0000437368" description="Glutathione S-transferase-like protein FUS3">
    <location>
        <begin position="1"/>
        <end position="220"/>
    </location>
</feature>
<feature type="domain" description="GST N-terminal" evidence="2">
    <location>
        <begin position="3"/>
        <end position="84"/>
    </location>
</feature>
<feature type="domain" description="GST C-terminal" evidence="3">
    <location>
        <begin position="90"/>
        <end position="220"/>
    </location>
</feature>